<evidence type="ECO:0000255" key="1"/>
<evidence type="ECO:0000305" key="2"/>
<name>Y1856_STRP3</name>
<keyword id="KW-1003">Cell membrane</keyword>
<keyword id="KW-0472">Membrane</keyword>
<keyword id="KW-0762">Sugar transport</keyword>
<keyword id="KW-0812">Transmembrane</keyword>
<keyword id="KW-1133">Transmembrane helix</keyword>
<keyword id="KW-0813">Transport</keyword>
<comment type="subcellular location">
    <subcellularLocation>
        <location evidence="2">Cell membrane</location>
        <topology evidence="2">Multi-pass membrane protein</topology>
    </subcellularLocation>
</comment>
<comment type="similarity">
    <text evidence="2">Belongs to the GRP transporter (TC 2.A.7.5) family.</text>
</comment>
<comment type="sequence caution" evidence="2">
    <conflict type="erroneous initiation">
        <sequence resource="EMBL-CDS" id="AAM80463"/>
    </conflict>
</comment>
<gene>
    <name type="ordered locus">SpyM3_1856</name>
</gene>
<proteinExistence type="inferred from homology"/>
<reference key="1">
    <citation type="journal article" date="2002" name="Proc. Natl. Acad. Sci. U.S.A.">
        <title>Genome sequence of a serotype M3 strain of group A Streptococcus: phage-encoded toxins, the high-virulence phenotype, and clone emergence.</title>
        <authorList>
            <person name="Beres S.B."/>
            <person name="Sylva G.L."/>
            <person name="Barbian K.D."/>
            <person name="Lei B."/>
            <person name="Hoff J.S."/>
            <person name="Mammarella N.D."/>
            <person name="Liu M.-Y."/>
            <person name="Smoot J.C."/>
            <person name="Porcella S.F."/>
            <person name="Parkins L.D."/>
            <person name="Campbell D.S."/>
            <person name="Smith T.M."/>
            <person name="McCormick J.K."/>
            <person name="Leung D.Y.M."/>
            <person name="Schlievert P.M."/>
            <person name="Musser J.M."/>
        </authorList>
    </citation>
    <scope>NUCLEOTIDE SEQUENCE [LARGE SCALE GENOMIC DNA]</scope>
    <source>
        <strain>ATCC BAA-595 / MGAS315</strain>
    </source>
</reference>
<sequence length="287" mass="31222">MEGIFYALIPMFTWGSIGFVSNKIGGKPSQQTLGMTFGALLFSLAVWLIVRPEMTLQLWLFGILGGFIWSIGQTGQFHAMQYMGVSVANPLSSGSQLVLGSLIGVLVFHEWTRPMQFVVGSLALLLLIVGFYFSSKQDDANAQVNHLHNFSKGFRALTYSTIGYVMYAVLFNNIMKFEVLSVILPMAVGMVLGAITFMSFKISIDQYVIKNSVVGLLWGIGNIFMLLAASKAGLAIAFSFSQLGAIISIVGGILFLGETKTKKEMRWVVTGIICFIVGAILLGVVKS</sequence>
<dbReference type="EMBL" id="AE014074">
    <property type="protein sequence ID" value="AAM80463.1"/>
    <property type="status" value="ALT_INIT"/>
    <property type="molecule type" value="Genomic_DNA"/>
</dbReference>
<dbReference type="RefSeq" id="WP_002992310.1">
    <property type="nucleotide sequence ID" value="NC_004070.1"/>
</dbReference>
<dbReference type="SMR" id="P0DB50"/>
<dbReference type="KEGG" id="spg:SpyM3_1856"/>
<dbReference type="HOGENOM" id="CLU_076024_0_0_9"/>
<dbReference type="Proteomes" id="UP000000564">
    <property type="component" value="Chromosome"/>
</dbReference>
<dbReference type="GO" id="GO:0005886">
    <property type="term" value="C:plasma membrane"/>
    <property type="evidence" value="ECO:0007669"/>
    <property type="project" value="UniProtKB-SubCell"/>
</dbReference>
<dbReference type="GO" id="GO:0015144">
    <property type="term" value="F:carbohydrate transmembrane transporter activity"/>
    <property type="evidence" value="ECO:0007669"/>
    <property type="project" value="InterPro"/>
</dbReference>
<dbReference type="CDD" id="cd23110">
    <property type="entry name" value="GRP"/>
    <property type="match status" value="1"/>
</dbReference>
<dbReference type="InterPro" id="IPR010651">
    <property type="entry name" value="Sugar_transport"/>
</dbReference>
<dbReference type="NCBIfam" id="TIGR00776">
    <property type="entry name" value="RhaT"/>
    <property type="match status" value="1"/>
</dbReference>
<dbReference type="PANTHER" id="PTHR16119">
    <property type="entry name" value="TRANSMEMBRANE PROTEIN 144"/>
    <property type="match status" value="1"/>
</dbReference>
<dbReference type="PANTHER" id="PTHR16119:SF17">
    <property type="entry name" value="TRANSMEMBRANE PROTEIN 144"/>
    <property type="match status" value="1"/>
</dbReference>
<dbReference type="Pfam" id="PF06800">
    <property type="entry name" value="Sugar_transport"/>
    <property type="match status" value="1"/>
</dbReference>
<dbReference type="SUPFAM" id="SSF103481">
    <property type="entry name" value="Multidrug resistance efflux transporter EmrE"/>
    <property type="match status" value="1"/>
</dbReference>
<organism>
    <name type="scientific">Streptococcus pyogenes serotype M3 (strain ATCC BAA-595 / MGAS315)</name>
    <dbReference type="NCBI Taxonomy" id="198466"/>
    <lineage>
        <taxon>Bacteria</taxon>
        <taxon>Bacillati</taxon>
        <taxon>Bacillota</taxon>
        <taxon>Bacilli</taxon>
        <taxon>Lactobacillales</taxon>
        <taxon>Streptococcaceae</taxon>
        <taxon>Streptococcus</taxon>
    </lineage>
</organism>
<accession>P0DB50</accession>
<accession>P60948</accession>
<accession>Q99XH5</accession>
<feature type="chain" id="PRO_0000213664" description="Putative sugar uptake protein SpyM3_1856">
    <location>
        <begin position="1"/>
        <end position="287"/>
    </location>
</feature>
<feature type="transmembrane region" description="Helical" evidence="1">
    <location>
        <begin position="4"/>
        <end position="26"/>
    </location>
</feature>
<feature type="transmembrane region" description="Helical" evidence="1">
    <location>
        <begin position="33"/>
        <end position="50"/>
    </location>
</feature>
<feature type="transmembrane region" description="Helical" evidence="1">
    <location>
        <begin position="55"/>
        <end position="72"/>
    </location>
</feature>
<feature type="transmembrane region" description="Helical" evidence="1">
    <location>
        <begin position="85"/>
        <end position="107"/>
    </location>
</feature>
<feature type="transmembrane region" description="Helical" evidence="1">
    <location>
        <begin position="117"/>
        <end position="134"/>
    </location>
</feature>
<feature type="transmembrane region" description="Helical" evidence="1">
    <location>
        <begin position="154"/>
        <end position="171"/>
    </location>
</feature>
<feature type="transmembrane region" description="Helical" evidence="1">
    <location>
        <begin position="181"/>
        <end position="200"/>
    </location>
</feature>
<feature type="transmembrane region" description="Helical" evidence="1">
    <location>
        <begin position="207"/>
        <end position="229"/>
    </location>
</feature>
<feature type="transmembrane region" description="Helical" evidence="1">
    <location>
        <begin position="234"/>
        <end position="256"/>
    </location>
</feature>
<feature type="transmembrane region" description="Helical" evidence="1">
    <location>
        <begin position="268"/>
        <end position="285"/>
    </location>
</feature>
<protein>
    <recommendedName>
        <fullName>Putative sugar uptake protein SpyM3_1856</fullName>
    </recommendedName>
</protein>